<gene>
    <name evidence="1" type="primary">recA</name>
    <name type="ordered locus">Pfl01_1175</name>
</gene>
<sequence length="352" mass="37448">MDDNKKKALAAALGQIERQFGKGAVMRMGDQDRQAIPAISTGSLGLDIALGIGGLPKGRIVEIYGPESSGKTTLTLSVIAQAQKAGATCAFVDAEHALDPEYAGKLGVNVDDLLVSQPDTGEQALEITDMLVRSNAVDVIIVDSVAALVPKAEIEGEMGDMHVGLQARLMSQALRKITGNIKNANCLVIFINQIRMKIGVMFGSPETTTGGNALKFYASVRLDIRRTGAVKEGDEVVGSETRVKVVKNKVASPFRQAEFQILYGKGIYLNGEMIDLGVLHGFVEKSGAWYAYEGTKIGQGKANSAKFLADNPEVAAKLEKQLRDKLLSPAVIADSKASAVKETEDDLADADI</sequence>
<keyword id="KW-0067">ATP-binding</keyword>
<keyword id="KW-0963">Cytoplasm</keyword>
<keyword id="KW-0227">DNA damage</keyword>
<keyword id="KW-0233">DNA recombination</keyword>
<keyword id="KW-0234">DNA repair</keyword>
<keyword id="KW-0238">DNA-binding</keyword>
<keyword id="KW-0547">Nucleotide-binding</keyword>
<keyword id="KW-0742">SOS response</keyword>
<accession>Q3KH38</accession>
<reference key="1">
    <citation type="journal article" date="2009" name="Genome Biol.">
        <title>Genomic and genetic analyses of diversity and plant interactions of Pseudomonas fluorescens.</title>
        <authorList>
            <person name="Silby M.W."/>
            <person name="Cerdeno-Tarraga A.M."/>
            <person name="Vernikos G.S."/>
            <person name="Giddens S.R."/>
            <person name="Jackson R.W."/>
            <person name="Preston G.M."/>
            <person name="Zhang X.-X."/>
            <person name="Moon C.D."/>
            <person name="Gehrig S.M."/>
            <person name="Godfrey S.A.C."/>
            <person name="Knight C.G."/>
            <person name="Malone J.G."/>
            <person name="Robinson Z."/>
            <person name="Spiers A.J."/>
            <person name="Harris S."/>
            <person name="Challis G.L."/>
            <person name="Yaxley A.M."/>
            <person name="Harris D."/>
            <person name="Seeger K."/>
            <person name="Murphy L."/>
            <person name="Rutter S."/>
            <person name="Squares R."/>
            <person name="Quail M.A."/>
            <person name="Saunders E."/>
            <person name="Mavromatis K."/>
            <person name="Brettin T.S."/>
            <person name="Bentley S.D."/>
            <person name="Hothersall J."/>
            <person name="Stephens E."/>
            <person name="Thomas C.M."/>
            <person name="Parkhill J."/>
            <person name="Levy S.B."/>
            <person name="Rainey P.B."/>
            <person name="Thomson N.R."/>
        </authorList>
    </citation>
    <scope>NUCLEOTIDE SEQUENCE [LARGE SCALE GENOMIC DNA]</scope>
    <source>
        <strain>Pf0-1</strain>
    </source>
</reference>
<name>RECA_PSEPF</name>
<comment type="function">
    <text evidence="1">Can catalyze the hydrolysis of ATP in the presence of single-stranded DNA, the ATP-dependent uptake of single-stranded DNA by duplex DNA, and the ATP-dependent hybridization of homologous single-stranded DNAs. It interacts with LexA causing its activation and leading to its autocatalytic cleavage.</text>
</comment>
<comment type="subcellular location">
    <subcellularLocation>
        <location evidence="1">Cytoplasm</location>
    </subcellularLocation>
</comment>
<comment type="similarity">
    <text evidence="1">Belongs to the RecA family.</text>
</comment>
<dbReference type="EMBL" id="CP000094">
    <property type="protein sequence ID" value="ABA72918.1"/>
    <property type="molecule type" value="Genomic_DNA"/>
</dbReference>
<dbReference type="RefSeq" id="WP_003222269.1">
    <property type="nucleotide sequence ID" value="NC_007492.2"/>
</dbReference>
<dbReference type="SMR" id="Q3KH38"/>
<dbReference type="KEGG" id="pfo:Pfl01_1175"/>
<dbReference type="eggNOG" id="COG0468">
    <property type="taxonomic scope" value="Bacteria"/>
</dbReference>
<dbReference type="HOGENOM" id="CLU_040469_3_2_6"/>
<dbReference type="Proteomes" id="UP000002704">
    <property type="component" value="Chromosome"/>
</dbReference>
<dbReference type="GO" id="GO:0005829">
    <property type="term" value="C:cytosol"/>
    <property type="evidence" value="ECO:0007669"/>
    <property type="project" value="TreeGrafter"/>
</dbReference>
<dbReference type="GO" id="GO:0005524">
    <property type="term" value="F:ATP binding"/>
    <property type="evidence" value="ECO:0007669"/>
    <property type="project" value="UniProtKB-UniRule"/>
</dbReference>
<dbReference type="GO" id="GO:0016887">
    <property type="term" value="F:ATP hydrolysis activity"/>
    <property type="evidence" value="ECO:0007669"/>
    <property type="project" value="InterPro"/>
</dbReference>
<dbReference type="GO" id="GO:0140664">
    <property type="term" value="F:ATP-dependent DNA damage sensor activity"/>
    <property type="evidence" value="ECO:0007669"/>
    <property type="project" value="InterPro"/>
</dbReference>
<dbReference type="GO" id="GO:0003684">
    <property type="term" value="F:damaged DNA binding"/>
    <property type="evidence" value="ECO:0007669"/>
    <property type="project" value="UniProtKB-UniRule"/>
</dbReference>
<dbReference type="GO" id="GO:0003697">
    <property type="term" value="F:single-stranded DNA binding"/>
    <property type="evidence" value="ECO:0007669"/>
    <property type="project" value="UniProtKB-UniRule"/>
</dbReference>
<dbReference type="GO" id="GO:0006310">
    <property type="term" value="P:DNA recombination"/>
    <property type="evidence" value="ECO:0007669"/>
    <property type="project" value="UniProtKB-UniRule"/>
</dbReference>
<dbReference type="GO" id="GO:0006281">
    <property type="term" value="P:DNA repair"/>
    <property type="evidence" value="ECO:0007669"/>
    <property type="project" value="UniProtKB-UniRule"/>
</dbReference>
<dbReference type="GO" id="GO:0009432">
    <property type="term" value="P:SOS response"/>
    <property type="evidence" value="ECO:0007669"/>
    <property type="project" value="UniProtKB-UniRule"/>
</dbReference>
<dbReference type="CDD" id="cd00983">
    <property type="entry name" value="RecA"/>
    <property type="match status" value="1"/>
</dbReference>
<dbReference type="FunFam" id="3.40.50.300:FF:000087">
    <property type="entry name" value="Recombinase RecA"/>
    <property type="match status" value="1"/>
</dbReference>
<dbReference type="Gene3D" id="3.40.50.300">
    <property type="entry name" value="P-loop containing nucleotide triphosphate hydrolases"/>
    <property type="match status" value="1"/>
</dbReference>
<dbReference type="HAMAP" id="MF_00268">
    <property type="entry name" value="RecA"/>
    <property type="match status" value="1"/>
</dbReference>
<dbReference type="InterPro" id="IPR003593">
    <property type="entry name" value="AAA+_ATPase"/>
</dbReference>
<dbReference type="InterPro" id="IPR013765">
    <property type="entry name" value="DNA_recomb/repair_RecA"/>
</dbReference>
<dbReference type="InterPro" id="IPR020584">
    <property type="entry name" value="DNA_recomb/repair_RecA_CS"/>
</dbReference>
<dbReference type="InterPro" id="IPR027417">
    <property type="entry name" value="P-loop_NTPase"/>
</dbReference>
<dbReference type="InterPro" id="IPR049261">
    <property type="entry name" value="RecA-like_C"/>
</dbReference>
<dbReference type="InterPro" id="IPR049428">
    <property type="entry name" value="RecA-like_N"/>
</dbReference>
<dbReference type="InterPro" id="IPR020588">
    <property type="entry name" value="RecA_ATP-bd"/>
</dbReference>
<dbReference type="InterPro" id="IPR023400">
    <property type="entry name" value="RecA_C_sf"/>
</dbReference>
<dbReference type="InterPro" id="IPR020587">
    <property type="entry name" value="RecA_monomer-monomer_interface"/>
</dbReference>
<dbReference type="NCBIfam" id="TIGR02012">
    <property type="entry name" value="tigrfam_recA"/>
    <property type="match status" value="1"/>
</dbReference>
<dbReference type="PANTHER" id="PTHR45900:SF1">
    <property type="entry name" value="MITOCHONDRIAL DNA REPAIR PROTEIN RECA HOMOLOG-RELATED"/>
    <property type="match status" value="1"/>
</dbReference>
<dbReference type="PANTHER" id="PTHR45900">
    <property type="entry name" value="RECA"/>
    <property type="match status" value="1"/>
</dbReference>
<dbReference type="Pfam" id="PF00154">
    <property type="entry name" value="RecA"/>
    <property type="match status" value="1"/>
</dbReference>
<dbReference type="Pfam" id="PF21096">
    <property type="entry name" value="RecA_C"/>
    <property type="match status" value="1"/>
</dbReference>
<dbReference type="PRINTS" id="PR00142">
    <property type="entry name" value="RECA"/>
</dbReference>
<dbReference type="SMART" id="SM00382">
    <property type="entry name" value="AAA"/>
    <property type="match status" value="1"/>
</dbReference>
<dbReference type="SUPFAM" id="SSF52540">
    <property type="entry name" value="P-loop containing nucleoside triphosphate hydrolases"/>
    <property type="match status" value="1"/>
</dbReference>
<dbReference type="SUPFAM" id="SSF54752">
    <property type="entry name" value="RecA protein, C-terminal domain"/>
    <property type="match status" value="1"/>
</dbReference>
<dbReference type="PROSITE" id="PS00321">
    <property type="entry name" value="RECA_1"/>
    <property type="match status" value="1"/>
</dbReference>
<dbReference type="PROSITE" id="PS50162">
    <property type="entry name" value="RECA_2"/>
    <property type="match status" value="1"/>
</dbReference>
<dbReference type="PROSITE" id="PS50163">
    <property type="entry name" value="RECA_3"/>
    <property type="match status" value="1"/>
</dbReference>
<organism>
    <name type="scientific">Pseudomonas fluorescens (strain Pf0-1)</name>
    <dbReference type="NCBI Taxonomy" id="205922"/>
    <lineage>
        <taxon>Bacteria</taxon>
        <taxon>Pseudomonadati</taxon>
        <taxon>Pseudomonadota</taxon>
        <taxon>Gammaproteobacteria</taxon>
        <taxon>Pseudomonadales</taxon>
        <taxon>Pseudomonadaceae</taxon>
        <taxon>Pseudomonas</taxon>
    </lineage>
</organism>
<proteinExistence type="inferred from homology"/>
<feature type="chain" id="PRO_1000047972" description="Protein RecA">
    <location>
        <begin position="1"/>
        <end position="352"/>
    </location>
</feature>
<feature type="binding site" evidence="1">
    <location>
        <begin position="65"/>
        <end position="72"/>
    </location>
    <ligand>
        <name>ATP</name>
        <dbReference type="ChEBI" id="CHEBI:30616"/>
    </ligand>
</feature>
<evidence type="ECO:0000255" key="1">
    <source>
        <dbReference type="HAMAP-Rule" id="MF_00268"/>
    </source>
</evidence>
<protein>
    <recommendedName>
        <fullName evidence="1">Protein RecA</fullName>
    </recommendedName>
    <alternativeName>
        <fullName evidence="1">Recombinase A</fullName>
    </alternativeName>
</protein>